<dbReference type="EMBL" id="CP000308">
    <property type="protein sequence ID" value="ABG12198.1"/>
    <property type="molecule type" value="Genomic_DNA"/>
</dbReference>
<dbReference type="RefSeq" id="WP_002211521.1">
    <property type="nucleotide sequence ID" value="NZ_CP009906.1"/>
</dbReference>
<dbReference type="SMR" id="Q1CBH4"/>
<dbReference type="GeneID" id="57974913"/>
<dbReference type="KEGG" id="ypa:YPA_0229"/>
<dbReference type="Proteomes" id="UP000001971">
    <property type="component" value="Chromosome"/>
</dbReference>
<dbReference type="GO" id="GO:0005886">
    <property type="term" value="C:plasma membrane"/>
    <property type="evidence" value="ECO:0007669"/>
    <property type="project" value="UniProtKB-SubCell"/>
</dbReference>
<dbReference type="GO" id="GO:0055085">
    <property type="term" value="P:transmembrane transport"/>
    <property type="evidence" value="ECO:0007669"/>
    <property type="project" value="InterPro"/>
</dbReference>
<dbReference type="CDD" id="cd06261">
    <property type="entry name" value="TM_PBP2"/>
    <property type="match status" value="1"/>
</dbReference>
<dbReference type="FunFam" id="1.10.3720.10:FF:000028">
    <property type="entry name" value="sn-glycerol-3-phosphate ABC transporter permease UgpA"/>
    <property type="match status" value="1"/>
</dbReference>
<dbReference type="Gene3D" id="1.10.3720.10">
    <property type="entry name" value="MetI-like"/>
    <property type="match status" value="1"/>
</dbReference>
<dbReference type="InterPro" id="IPR000515">
    <property type="entry name" value="MetI-like"/>
</dbReference>
<dbReference type="InterPro" id="IPR035906">
    <property type="entry name" value="MetI-like_sf"/>
</dbReference>
<dbReference type="InterPro" id="IPR050809">
    <property type="entry name" value="UgpAE/MalFG_permease"/>
</dbReference>
<dbReference type="NCBIfam" id="NF007852">
    <property type="entry name" value="PRK10561.1"/>
    <property type="match status" value="1"/>
</dbReference>
<dbReference type="PANTHER" id="PTHR43227">
    <property type="entry name" value="BLL4140 PROTEIN"/>
    <property type="match status" value="1"/>
</dbReference>
<dbReference type="PANTHER" id="PTHR43227:SF9">
    <property type="entry name" value="SN-GLYCEROL-3-PHOSPHATE TRANSPORT SYSTEM PERMEASE PROTEIN UGPA"/>
    <property type="match status" value="1"/>
</dbReference>
<dbReference type="Pfam" id="PF00528">
    <property type="entry name" value="BPD_transp_1"/>
    <property type="match status" value="1"/>
</dbReference>
<dbReference type="SUPFAM" id="SSF161098">
    <property type="entry name" value="MetI-like"/>
    <property type="match status" value="1"/>
</dbReference>
<dbReference type="PROSITE" id="PS50928">
    <property type="entry name" value="ABC_TM1"/>
    <property type="match status" value="1"/>
</dbReference>
<gene>
    <name type="primary">ugpA</name>
    <name type="ordered locus">YPA_0229</name>
</gene>
<keyword id="KW-0997">Cell inner membrane</keyword>
<keyword id="KW-1003">Cell membrane</keyword>
<keyword id="KW-0472">Membrane</keyword>
<keyword id="KW-0812">Transmembrane</keyword>
<keyword id="KW-1133">Transmembrane helix</keyword>
<keyword id="KW-0813">Transport</keyword>
<feature type="chain" id="PRO_0000292835" description="sn-glycerol-3-phosphate transport system permease protein UgpA">
    <location>
        <begin position="1"/>
        <end position="295"/>
    </location>
</feature>
<feature type="topological domain" description="Cytoplasmic" evidence="2">
    <location>
        <begin position="1"/>
        <end position="11"/>
    </location>
</feature>
<feature type="transmembrane region" description="Helical" evidence="3">
    <location>
        <begin position="12"/>
        <end position="32"/>
    </location>
</feature>
<feature type="topological domain" description="Periplasmic" evidence="2">
    <location>
        <begin position="33"/>
        <end position="80"/>
    </location>
</feature>
<feature type="transmembrane region" description="Helical" evidence="3">
    <location>
        <begin position="81"/>
        <end position="101"/>
    </location>
</feature>
<feature type="topological domain" description="Cytoplasmic" evidence="2">
    <location>
        <begin position="102"/>
        <end position="109"/>
    </location>
</feature>
<feature type="transmembrane region" description="Helical" evidence="3">
    <location>
        <begin position="110"/>
        <end position="130"/>
    </location>
</feature>
<feature type="topological domain" description="Periplasmic" evidence="2">
    <location>
        <begin position="131"/>
        <end position="157"/>
    </location>
</feature>
<feature type="transmembrane region" description="Helical" evidence="3">
    <location>
        <begin position="158"/>
        <end position="178"/>
    </location>
</feature>
<feature type="topological domain" description="Cytoplasmic" evidence="2">
    <location>
        <begin position="179"/>
        <end position="207"/>
    </location>
</feature>
<feature type="transmembrane region" description="Helical" evidence="3">
    <location>
        <begin position="208"/>
        <end position="228"/>
    </location>
</feature>
<feature type="topological domain" description="Periplasmic" evidence="2">
    <location>
        <begin position="229"/>
        <end position="262"/>
    </location>
</feature>
<feature type="transmembrane region" description="Helical" evidence="3">
    <location>
        <begin position="263"/>
        <end position="283"/>
    </location>
</feature>
<feature type="topological domain" description="Cytoplasmic" evidence="2">
    <location>
        <begin position="284"/>
        <end position="295"/>
    </location>
</feature>
<feature type="domain" description="ABC transmembrane type-1" evidence="3">
    <location>
        <begin position="72"/>
        <end position="284"/>
    </location>
</feature>
<organism>
    <name type="scientific">Yersinia pestis bv. Antiqua (strain Antiqua)</name>
    <dbReference type="NCBI Taxonomy" id="360102"/>
    <lineage>
        <taxon>Bacteria</taxon>
        <taxon>Pseudomonadati</taxon>
        <taxon>Pseudomonadota</taxon>
        <taxon>Gammaproteobacteria</taxon>
        <taxon>Enterobacterales</taxon>
        <taxon>Yersiniaceae</taxon>
        <taxon>Yersinia</taxon>
    </lineage>
</organism>
<evidence type="ECO:0000250" key="1">
    <source>
        <dbReference type="UniProtKB" id="P10905"/>
    </source>
</evidence>
<evidence type="ECO:0000255" key="2"/>
<evidence type="ECO:0000255" key="3">
    <source>
        <dbReference type="PROSITE-ProRule" id="PRU00441"/>
    </source>
</evidence>
<evidence type="ECO:0000305" key="4"/>
<accession>Q1CBH4</accession>
<sequence length="295" mass="32503">MSPSRPGFSCSWLPYLLVLPQLAITAIFFLWPAGEALWYSVQTLDPFGLSSEFVGLSNFIQLFQDEYYLASFYTTLIFSALVAGIGLIVSLFLAAMVNYVLRGSRLYQTLLILPYAVAPAVAAVLWIFLFDPGLGLITHALAKLGYSWNHAQNSGQAMFLVVLASVWKQISYNFLFFLAALQSIPKSLVEAAAIDGAGPVRRFFNLVLPLISPVSFFLLVVNLVYAFFDTFPVIDAATGGGPVQATTTLIYKIYREGFAGLDLSSSAAQSVILMLLVIGLTVIQFRFVERKVRYQ</sequence>
<reference key="1">
    <citation type="journal article" date="2006" name="J. Bacteriol.">
        <title>Complete genome sequence of Yersinia pestis strains Antiqua and Nepal516: evidence of gene reduction in an emerging pathogen.</title>
        <authorList>
            <person name="Chain P.S.G."/>
            <person name="Hu P."/>
            <person name="Malfatti S.A."/>
            <person name="Radnedge L."/>
            <person name="Larimer F."/>
            <person name="Vergez L.M."/>
            <person name="Worsham P."/>
            <person name="Chu M.C."/>
            <person name="Andersen G.L."/>
        </authorList>
    </citation>
    <scope>NUCLEOTIDE SEQUENCE [LARGE SCALE GENOMIC DNA]</scope>
    <source>
        <strain>Antiqua</strain>
    </source>
</reference>
<protein>
    <recommendedName>
        <fullName evidence="1">sn-glycerol-3-phosphate transport system permease protein UgpA</fullName>
    </recommendedName>
</protein>
<name>UGPA_YERPA</name>
<proteinExistence type="inferred from homology"/>
<comment type="function">
    <text evidence="1">Part of the ABC transporter complex UgpBAEC involved in sn-glycerol-3-phosphate (G3P) import. Probably responsible for the translocation of the substrate across the membrane.</text>
</comment>
<comment type="subunit">
    <text evidence="1">The complex is composed of two ATP-binding proteins (UgpC), two transmembrane proteins (UgpA and UgpE) and a solute-binding protein (UgpB).</text>
</comment>
<comment type="subcellular location">
    <subcellularLocation>
        <location evidence="1">Cell inner membrane</location>
        <topology evidence="2">Multi-pass membrane protein</topology>
    </subcellularLocation>
</comment>
<comment type="similarity">
    <text evidence="4">Belongs to the binding-protein-dependent transport system permease family. UgpAE subfamily.</text>
</comment>